<evidence type="ECO:0000250" key="1">
    <source>
        <dbReference type="UniProtKB" id="O14744"/>
    </source>
</evidence>
<evidence type="ECO:0000255" key="2">
    <source>
        <dbReference type="PROSITE-ProRule" id="PRU01015"/>
    </source>
</evidence>
<evidence type="ECO:0000256" key="3">
    <source>
        <dbReference type="SAM" id="MobiDB-lite"/>
    </source>
</evidence>
<evidence type="ECO:0000269" key="4">
    <source>
    </source>
</evidence>
<evidence type="ECO:0000269" key="5">
    <source>
    </source>
</evidence>
<evidence type="ECO:0000269" key="6">
    <source>
    </source>
</evidence>
<evidence type="ECO:0000269" key="7">
    <source>
    </source>
</evidence>
<evidence type="ECO:0000269" key="8">
    <source>
    </source>
</evidence>
<evidence type="ECO:0000269" key="9">
    <source>
    </source>
</evidence>
<evidence type="ECO:0000303" key="10">
    <source>
    </source>
</evidence>
<evidence type="ECO:0000305" key="11">
    <source>
    </source>
</evidence>
<evidence type="ECO:0000312" key="12">
    <source>
        <dbReference type="WormBase" id="C34E10.5"/>
    </source>
</evidence>
<evidence type="ECO:0007829" key="13">
    <source>
        <dbReference type="PDB" id="3UA3"/>
    </source>
</evidence>
<evidence type="ECO:0007829" key="14">
    <source>
        <dbReference type="PDB" id="3UA4"/>
    </source>
</evidence>
<dbReference type="EC" id="2.1.1.320" evidence="5 7"/>
<dbReference type="EMBL" id="BX284603">
    <property type="protein sequence ID" value="CCD66649.1"/>
    <property type="molecule type" value="Genomic_DNA"/>
</dbReference>
<dbReference type="PIR" id="T15762">
    <property type="entry name" value="T15762"/>
</dbReference>
<dbReference type="RefSeq" id="NP_498112.1">
    <property type="nucleotide sequence ID" value="NM_065711.9"/>
</dbReference>
<dbReference type="PDB" id="3UA3">
    <property type="method" value="X-ray"/>
    <property type="resolution" value="3.00 A"/>
    <property type="chains" value="A/B=1-734"/>
</dbReference>
<dbReference type="PDB" id="3UA4">
    <property type="method" value="X-ray"/>
    <property type="resolution" value="3.00 A"/>
    <property type="chains" value="A/B=1-734"/>
</dbReference>
<dbReference type="PDBsum" id="3UA3"/>
<dbReference type="PDBsum" id="3UA4"/>
<dbReference type="SMR" id="P46580"/>
<dbReference type="BioGRID" id="40948">
    <property type="interactions" value="19"/>
</dbReference>
<dbReference type="ComplexPortal" id="CPX-1131">
    <property type="entry name" value="Prmt-5-cep-1-cbp-1 complex"/>
</dbReference>
<dbReference type="DIP" id="DIP-25435N"/>
<dbReference type="FunCoup" id="P46580">
    <property type="interactions" value="2785"/>
</dbReference>
<dbReference type="IntAct" id="P46580">
    <property type="interactions" value="2"/>
</dbReference>
<dbReference type="STRING" id="6239.C34E10.5.2"/>
<dbReference type="iPTMnet" id="P46580"/>
<dbReference type="PaxDb" id="6239-C34E10.5.3"/>
<dbReference type="PeptideAtlas" id="P46580"/>
<dbReference type="EnsemblMetazoa" id="C34E10.5.1">
    <property type="protein sequence ID" value="C34E10.5.1"/>
    <property type="gene ID" value="WBGene00016408"/>
</dbReference>
<dbReference type="EnsemblMetazoa" id="C34E10.5.2">
    <property type="protein sequence ID" value="C34E10.5.2"/>
    <property type="gene ID" value="WBGene00016408"/>
</dbReference>
<dbReference type="EnsemblMetazoa" id="C34E10.5.3">
    <property type="protein sequence ID" value="C34E10.5.3"/>
    <property type="gene ID" value="WBGene00016408"/>
</dbReference>
<dbReference type="GeneID" id="175717"/>
<dbReference type="KEGG" id="cel:CELE_C34E10.5"/>
<dbReference type="UCSC" id="C34E10.5.3">
    <property type="organism name" value="c. elegans"/>
</dbReference>
<dbReference type="AGR" id="WB:WBGene00016408"/>
<dbReference type="CTD" id="175717"/>
<dbReference type="WormBase" id="C34E10.5">
    <property type="protein sequence ID" value="CE29033"/>
    <property type="gene ID" value="WBGene00016408"/>
    <property type="gene designation" value="prmt-5"/>
</dbReference>
<dbReference type="eggNOG" id="KOG0822">
    <property type="taxonomic scope" value="Eukaryota"/>
</dbReference>
<dbReference type="GeneTree" id="ENSGT00390000001141"/>
<dbReference type="HOGENOM" id="CLU_010247_3_0_1"/>
<dbReference type="InParanoid" id="P46580"/>
<dbReference type="OMA" id="IKYAWYE"/>
<dbReference type="OrthoDB" id="1368803at2759"/>
<dbReference type="PhylomeDB" id="P46580"/>
<dbReference type="BRENDA" id="2.1.1.320">
    <property type="organism ID" value="1045"/>
</dbReference>
<dbReference type="SignaLink" id="P46580"/>
<dbReference type="EvolutionaryTrace" id="P46580"/>
<dbReference type="PRO" id="PR:P46580"/>
<dbReference type="Proteomes" id="UP000001940">
    <property type="component" value="Chromosome III"/>
</dbReference>
<dbReference type="Bgee" id="WBGene00016408">
    <property type="expression patterns" value="Expressed in germ line (C elegans) and 4 other cell types or tissues"/>
</dbReference>
<dbReference type="GO" id="GO:0005829">
    <property type="term" value="C:cytosol"/>
    <property type="evidence" value="ECO:0000318"/>
    <property type="project" value="GO_Central"/>
</dbReference>
<dbReference type="GO" id="GO:0005634">
    <property type="term" value="C:nucleus"/>
    <property type="evidence" value="ECO:0000314"/>
    <property type="project" value="WormBase"/>
</dbReference>
<dbReference type="GO" id="GO:0017053">
    <property type="term" value="C:transcription repressor complex"/>
    <property type="evidence" value="ECO:0000353"/>
    <property type="project" value="ComplexPortal"/>
</dbReference>
<dbReference type="GO" id="GO:0140297">
    <property type="term" value="F:DNA-binding transcription factor binding"/>
    <property type="evidence" value="ECO:0000353"/>
    <property type="project" value="WormBase"/>
</dbReference>
<dbReference type="GO" id="GO:0008469">
    <property type="term" value="F:histone arginine N-methyltransferase activity"/>
    <property type="evidence" value="ECO:0000314"/>
    <property type="project" value="WormBase"/>
</dbReference>
<dbReference type="GO" id="GO:0140940">
    <property type="term" value="F:histone H2A methyltransferase activity"/>
    <property type="evidence" value="ECO:0000314"/>
    <property type="project" value="UniProtKB"/>
</dbReference>
<dbReference type="GO" id="GO:0044020">
    <property type="term" value="F:histone H4R3 methyltransferase activity"/>
    <property type="evidence" value="ECO:0000314"/>
    <property type="project" value="WormBase"/>
</dbReference>
<dbReference type="GO" id="GO:0002039">
    <property type="term" value="F:p53 binding"/>
    <property type="evidence" value="ECO:0000353"/>
    <property type="project" value="WormBase"/>
</dbReference>
<dbReference type="GO" id="GO:0016274">
    <property type="term" value="F:protein-arginine N-methyltransferase activity"/>
    <property type="evidence" value="ECO:0000314"/>
    <property type="project" value="WormBase"/>
</dbReference>
<dbReference type="GO" id="GO:0035241">
    <property type="term" value="F:protein-arginine omega-N monomethyltransferase activity"/>
    <property type="evidence" value="ECO:0000314"/>
    <property type="project" value="UniProtKB"/>
</dbReference>
<dbReference type="GO" id="GO:0035243">
    <property type="term" value="F:protein-arginine omega-N symmetric methyltransferase activity"/>
    <property type="evidence" value="ECO:0000314"/>
    <property type="project" value="UniProtKB"/>
</dbReference>
<dbReference type="GO" id="GO:0008630">
    <property type="term" value="P:intrinsic apoptotic signaling pathway in response to DNA damage"/>
    <property type="evidence" value="ECO:0000315"/>
    <property type="project" value="WormBase"/>
</dbReference>
<dbReference type="GO" id="GO:0007626">
    <property type="term" value="P:locomotory behavior"/>
    <property type="evidence" value="ECO:0000315"/>
    <property type="project" value="WormBase"/>
</dbReference>
<dbReference type="GO" id="GO:0032259">
    <property type="term" value="P:methylation"/>
    <property type="evidence" value="ECO:0007669"/>
    <property type="project" value="UniProtKB-KW"/>
</dbReference>
<dbReference type="GO" id="GO:0043518">
    <property type="term" value="P:negative regulation of DNA damage response, signal transduction by p53 class mediator"/>
    <property type="evidence" value="ECO:0000316"/>
    <property type="project" value="WormBase"/>
</dbReference>
<dbReference type="GO" id="GO:0045892">
    <property type="term" value="P:negative regulation of DNA-templated transcription"/>
    <property type="evidence" value="ECO:0000314"/>
    <property type="project" value="WormBase"/>
</dbReference>
<dbReference type="GO" id="GO:0006355">
    <property type="term" value="P:regulation of DNA-templated transcription"/>
    <property type="evidence" value="ECO:0000318"/>
    <property type="project" value="GO_Central"/>
</dbReference>
<dbReference type="GO" id="GO:1990834">
    <property type="term" value="P:response to odorant"/>
    <property type="evidence" value="ECO:0000315"/>
    <property type="project" value="WormBase"/>
</dbReference>
<dbReference type="FunFam" id="3.40.50.150:FF:000321">
    <property type="entry name" value="Protein arginine N-methyltransferase"/>
    <property type="match status" value="1"/>
</dbReference>
<dbReference type="FunFam" id="2.70.160.11:FF:000028">
    <property type="entry name" value="Protein arginine N-methyltransferase 5"/>
    <property type="match status" value="1"/>
</dbReference>
<dbReference type="FunFam" id="3.20.20.150:FF:000058">
    <property type="entry name" value="Protein arginine N-methyltransferase 5"/>
    <property type="match status" value="1"/>
</dbReference>
<dbReference type="Gene3D" id="3.20.20.150">
    <property type="entry name" value="Divalent-metal-dependent TIM barrel enzymes"/>
    <property type="match status" value="1"/>
</dbReference>
<dbReference type="Gene3D" id="2.70.160.11">
    <property type="entry name" value="Hnrnp arginine n-methyltransferase1"/>
    <property type="match status" value="1"/>
</dbReference>
<dbReference type="Gene3D" id="3.40.50.150">
    <property type="entry name" value="Vaccinia Virus protein VP39"/>
    <property type="match status" value="1"/>
</dbReference>
<dbReference type="InterPro" id="IPR025799">
    <property type="entry name" value="Arg_MeTrfase"/>
</dbReference>
<dbReference type="InterPro" id="IPR007857">
    <property type="entry name" value="Arg_MeTrfase_PRMT5"/>
</dbReference>
<dbReference type="InterPro" id="IPR035075">
    <property type="entry name" value="PRMT5"/>
</dbReference>
<dbReference type="InterPro" id="IPR035248">
    <property type="entry name" value="PRMT5_C"/>
</dbReference>
<dbReference type="InterPro" id="IPR035247">
    <property type="entry name" value="PRMT5_TIM"/>
</dbReference>
<dbReference type="InterPro" id="IPR029063">
    <property type="entry name" value="SAM-dependent_MTases_sf"/>
</dbReference>
<dbReference type="PANTHER" id="PTHR10738">
    <property type="entry name" value="PROTEIN ARGININE N-METHYLTRANSFERASE 5"/>
    <property type="match status" value="1"/>
</dbReference>
<dbReference type="PANTHER" id="PTHR10738:SF0">
    <property type="entry name" value="PROTEIN ARGININE N-METHYLTRANSFERASE 5"/>
    <property type="match status" value="1"/>
</dbReference>
<dbReference type="Pfam" id="PF05185">
    <property type="entry name" value="PRMT5"/>
    <property type="match status" value="1"/>
</dbReference>
<dbReference type="Pfam" id="PF17286">
    <property type="entry name" value="PRMT5_C"/>
    <property type="match status" value="1"/>
</dbReference>
<dbReference type="Pfam" id="PF17285">
    <property type="entry name" value="PRMT5_TIM"/>
    <property type="match status" value="1"/>
</dbReference>
<dbReference type="PIRSF" id="PIRSF015894">
    <property type="entry name" value="Skb1_MeTrfase"/>
    <property type="match status" value="1"/>
</dbReference>
<dbReference type="SUPFAM" id="SSF53335">
    <property type="entry name" value="S-adenosyl-L-methionine-dependent methyltransferases"/>
    <property type="match status" value="1"/>
</dbReference>
<dbReference type="PROSITE" id="PS51678">
    <property type="entry name" value="SAM_MT_PRMT"/>
    <property type="match status" value="1"/>
</dbReference>
<protein>
    <recommendedName>
        <fullName evidence="10">Protein arginine N-methyltransferase 5</fullName>
        <ecNumber evidence="5 7">2.1.1.320</ecNumber>
    </recommendedName>
</protein>
<accession>P46580</accession>
<accession>Q8T8N5</accession>
<organism>
    <name type="scientific">Caenorhabditis elegans</name>
    <dbReference type="NCBI Taxonomy" id="6239"/>
    <lineage>
        <taxon>Eukaryota</taxon>
        <taxon>Metazoa</taxon>
        <taxon>Ecdysozoa</taxon>
        <taxon>Nematoda</taxon>
        <taxon>Chromadorea</taxon>
        <taxon>Rhabditida</taxon>
        <taxon>Rhabditina</taxon>
        <taxon>Rhabditomorpha</taxon>
        <taxon>Rhabditoidea</taxon>
        <taxon>Rhabditidae</taxon>
        <taxon>Peloderinae</taxon>
        <taxon>Caenorhabditis</taxon>
    </lineage>
</organism>
<keyword id="KW-0002">3D-structure</keyword>
<keyword id="KW-0053">Apoptosis</keyword>
<keyword id="KW-0156">Chromatin regulator</keyword>
<keyword id="KW-0227">DNA damage</keyword>
<keyword id="KW-0489">Methyltransferase</keyword>
<keyword id="KW-0539">Nucleus</keyword>
<keyword id="KW-1185">Reference proteome</keyword>
<keyword id="KW-0949">S-adenosyl-L-methionine</keyword>
<keyword id="KW-0804">Transcription</keyword>
<keyword id="KW-0805">Transcription regulation</keyword>
<keyword id="KW-0808">Transferase</keyword>
<name>ANM5_CAEEL</name>
<feature type="chain" id="PRO_0000212348" description="Protein arginine N-methyltransferase 5">
    <location>
        <begin position="1"/>
        <end position="734"/>
    </location>
</feature>
<feature type="domain" description="SAM-dependent MTase PRMT-type" evidence="2">
    <location>
        <begin position="360"/>
        <end position="706"/>
    </location>
</feature>
<feature type="region of interest" description="Disordered" evidence="3">
    <location>
        <begin position="1"/>
        <end position="39"/>
    </location>
</feature>
<feature type="region of interest" description="TIM barrel" evidence="6">
    <location>
        <begin position="42"/>
        <end position="329"/>
    </location>
</feature>
<feature type="region of interest" description="Beta barrel" evidence="6">
    <location>
        <begin position="529"/>
        <end position="734"/>
    </location>
</feature>
<feature type="region of interest" description="Dimerization" evidence="6">
    <location>
        <begin position="541"/>
        <end position="589"/>
    </location>
</feature>
<feature type="compositionally biased region" description="Polar residues" evidence="3">
    <location>
        <begin position="1"/>
        <end position="16"/>
    </location>
</feature>
<feature type="compositionally biased region" description="Low complexity" evidence="3">
    <location>
        <begin position="24"/>
        <end position="39"/>
    </location>
</feature>
<feature type="active site" description="Proton donor/acceptor" evidence="11">
    <location>
        <position position="499"/>
    </location>
</feature>
<feature type="active site" description="Proton donor/acceptor" evidence="11">
    <location>
        <position position="508"/>
    </location>
</feature>
<feature type="binding site" evidence="1">
    <location>
        <position position="376"/>
    </location>
    <ligand>
        <name>S-adenosyl-L-methionine</name>
        <dbReference type="ChEBI" id="CHEBI:59789"/>
    </ligand>
</feature>
<feature type="binding site" evidence="1">
    <location>
        <position position="379"/>
    </location>
    <ligand>
        <name>a protein</name>
        <dbReference type="ChEBI" id="CHEBI:16541"/>
        <note>substrate</note>
    </ligand>
    <ligandPart>
        <name>L-arginine residue</name>
        <dbReference type="ChEBI" id="CHEBI:29965"/>
    </ligandPart>
</feature>
<feature type="binding site" evidence="1">
    <location>
        <begin position="385"/>
        <end position="386"/>
    </location>
    <ligand>
        <name>S-adenosyl-L-methionine</name>
        <dbReference type="ChEBI" id="CHEBI:59789"/>
    </ligand>
</feature>
<feature type="binding site" evidence="1">
    <location>
        <position position="450"/>
    </location>
    <ligand>
        <name>S-adenosyl-L-methionine</name>
        <dbReference type="ChEBI" id="CHEBI:59789"/>
    </ligand>
</feature>
<feature type="binding site" evidence="1">
    <location>
        <begin position="477"/>
        <end position="478"/>
    </location>
    <ligand>
        <name>S-adenosyl-L-methionine</name>
        <dbReference type="ChEBI" id="CHEBI:59789"/>
    </ligand>
</feature>
<feature type="binding site" evidence="1">
    <location>
        <position position="499"/>
    </location>
    <ligand>
        <name>a protein</name>
        <dbReference type="ChEBI" id="CHEBI:16541"/>
        <note>substrate</note>
    </ligand>
    <ligandPart>
        <name>L-arginine residue</name>
        <dbReference type="ChEBI" id="CHEBI:29965"/>
    </ligandPart>
</feature>
<feature type="binding site" evidence="1">
    <location>
        <position position="508"/>
    </location>
    <ligand>
        <name>a protein</name>
        <dbReference type="ChEBI" id="CHEBI:16541"/>
        <note>substrate</note>
    </ligand>
    <ligandPart>
        <name>L-arginine residue</name>
        <dbReference type="ChEBI" id="CHEBI:29965"/>
    </ligandPart>
</feature>
<feature type="site" description="Critical for specifying symmetric addition of methyl groups" evidence="6">
    <location>
        <position position="379"/>
    </location>
</feature>
<feature type="mutagenesis site" description="Significantly elevates methylase activity, and converts PRMT5 to an enzyme catalyzing both symmetric and asymmetric arginine dimethylation." evidence="6">
    <original>F</original>
    <variation>M</variation>
    <location>
        <position position="379"/>
    </location>
</feature>
<feature type="mutagenesis site" description="Abolishes catalytic activity." evidence="6">
    <original>F</original>
    <variation>Y</variation>
    <location>
        <position position="379"/>
    </location>
</feature>
<feature type="strand" evidence="13">
    <location>
        <begin position="50"/>
        <end position="53"/>
    </location>
</feature>
<feature type="strand" evidence="14">
    <location>
        <begin position="56"/>
        <end position="58"/>
    </location>
</feature>
<feature type="turn" evidence="13">
    <location>
        <begin position="61"/>
        <end position="66"/>
    </location>
</feature>
<feature type="helix" evidence="13">
    <location>
        <begin position="67"/>
        <end position="76"/>
    </location>
</feature>
<feature type="strand" evidence="14">
    <location>
        <begin position="82"/>
        <end position="85"/>
    </location>
</feature>
<feature type="helix" evidence="13">
    <location>
        <begin position="89"/>
        <end position="92"/>
    </location>
</feature>
<feature type="helix" evidence="13">
    <location>
        <begin position="116"/>
        <end position="121"/>
    </location>
</feature>
<feature type="strand" evidence="14">
    <location>
        <begin position="122"/>
        <end position="126"/>
    </location>
</feature>
<feature type="helix" evidence="13">
    <location>
        <begin position="138"/>
        <end position="157"/>
    </location>
</feature>
<feature type="strand" evidence="13">
    <location>
        <begin position="161"/>
        <end position="166"/>
    </location>
</feature>
<feature type="helix" evidence="13">
    <location>
        <begin position="173"/>
        <end position="185"/>
    </location>
</feature>
<feature type="strand" evidence="13">
    <location>
        <begin position="191"/>
        <end position="195"/>
    </location>
</feature>
<feature type="helix" evidence="13">
    <location>
        <begin position="200"/>
        <end position="202"/>
    </location>
</feature>
<feature type="turn" evidence="13">
    <location>
        <begin position="208"/>
        <end position="210"/>
    </location>
</feature>
<feature type="helix" evidence="13">
    <location>
        <begin position="216"/>
        <end position="226"/>
    </location>
</feature>
<feature type="turn" evidence="13">
    <location>
        <begin position="232"/>
        <end position="234"/>
    </location>
</feature>
<feature type="strand" evidence="13">
    <location>
        <begin position="235"/>
        <end position="241"/>
    </location>
</feature>
<feature type="helix" evidence="13">
    <location>
        <begin position="247"/>
        <end position="249"/>
    </location>
</feature>
<feature type="helix" evidence="13">
    <location>
        <begin position="252"/>
        <end position="255"/>
    </location>
</feature>
<feature type="helix" evidence="13">
    <location>
        <begin position="257"/>
        <end position="260"/>
    </location>
</feature>
<feature type="strand" evidence="13">
    <location>
        <begin position="263"/>
        <end position="270"/>
    </location>
</feature>
<feature type="turn" evidence="13">
    <location>
        <begin position="277"/>
        <end position="279"/>
    </location>
</feature>
<feature type="helix" evidence="13">
    <location>
        <begin position="285"/>
        <end position="293"/>
    </location>
</feature>
<feature type="strand" evidence="13">
    <location>
        <begin position="301"/>
        <end position="305"/>
    </location>
</feature>
<feature type="turn" evidence="13">
    <location>
        <begin position="312"/>
        <end position="314"/>
    </location>
</feature>
<feature type="helix" evidence="13">
    <location>
        <begin position="318"/>
        <end position="326"/>
    </location>
</feature>
<feature type="turn" evidence="13">
    <location>
        <begin position="327"/>
        <end position="329"/>
    </location>
</feature>
<feature type="turn" evidence="13">
    <location>
        <begin position="366"/>
        <end position="368"/>
    </location>
</feature>
<feature type="helix" evidence="13">
    <location>
        <begin position="373"/>
        <end position="381"/>
    </location>
</feature>
<feature type="helix" evidence="13">
    <location>
        <begin position="383"/>
        <end position="401"/>
    </location>
</feature>
<feature type="strand" evidence="13">
    <location>
        <begin position="406"/>
        <end position="414"/>
    </location>
</feature>
<feature type="helix" evidence="13">
    <location>
        <begin position="419"/>
        <end position="435"/>
    </location>
</feature>
<feature type="strand" evidence="13">
    <location>
        <begin position="443"/>
        <end position="450"/>
    </location>
</feature>
<feature type="helix" evidence="13">
    <location>
        <begin position="453"/>
        <end position="465"/>
    </location>
</feature>
<feature type="turn" evidence="13">
    <location>
        <begin position="466"/>
        <end position="469"/>
    </location>
</feature>
<feature type="strand" evidence="13">
    <location>
        <begin position="471"/>
        <end position="476"/>
    </location>
</feature>
<feature type="helix" evidence="13">
    <location>
        <begin position="478"/>
        <end position="480"/>
    </location>
</feature>
<feature type="helix" evidence="13">
    <location>
        <begin position="481"/>
        <end position="487"/>
    </location>
</feature>
<feature type="strand" evidence="13">
    <location>
        <begin position="494"/>
        <end position="498"/>
    </location>
</feature>
<feature type="helix" evidence="13">
    <location>
        <begin position="506"/>
        <end position="508"/>
    </location>
</feature>
<feature type="helix" evidence="13">
    <location>
        <begin position="510"/>
        <end position="515"/>
    </location>
</feature>
<feature type="helix" evidence="13">
    <location>
        <begin position="516"/>
        <end position="520"/>
    </location>
</feature>
<feature type="strand" evidence="13">
    <location>
        <begin position="526"/>
        <end position="529"/>
    </location>
</feature>
<feature type="strand" evidence="13">
    <location>
        <begin position="531"/>
        <end position="540"/>
    </location>
</feature>
<feature type="helix" evidence="13">
    <location>
        <begin position="542"/>
        <end position="549"/>
    </location>
</feature>
<feature type="helix" evidence="13">
    <location>
        <begin position="555"/>
        <end position="557"/>
    </location>
</feature>
<feature type="strand" evidence="13">
    <location>
        <begin position="563"/>
        <end position="565"/>
    </location>
</feature>
<feature type="helix" evidence="13">
    <location>
        <begin position="584"/>
        <end position="589"/>
    </location>
</feature>
<feature type="strand" evidence="13">
    <location>
        <begin position="593"/>
        <end position="595"/>
    </location>
</feature>
<feature type="strand" evidence="13">
    <location>
        <begin position="601"/>
        <end position="606"/>
    </location>
</feature>
<feature type="strand" evidence="13">
    <location>
        <begin position="608"/>
        <end position="616"/>
    </location>
</feature>
<feature type="strand" evidence="13">
    <location>
        <begin position="625"/>
        <end position="632"/>
    </location>
</feature>
<feature type="strand" evidence="13">
    <location>
        <begin position="635"/>
        <end position="651"/>
    </location>
</feature>
<feature type="strand" evidence="13">
    <location>
        <begin position="654"/>
        <end position="657"/>
    </location>
</feature>
<feature type="helix" evidence="14">
    <location>
        <begin position="660"/>
        <end position="662"/>
    </location>
</feature>
<feature type="strand" evidence="13">
    <location>
        <begin position="673"/>
        <end position="683"/>
    </location>
</feature>
<feature type="strand" evidence="13">
    <location>
        <begin position="688"/>
        <end position="698"/>
    </location>
</feature>
<feature type="strand" evidence="13">
    <location>
        <begin position="701"/>
        <end position="711"/>
    </location>
</feature>
<feature type="strand" evidence="13">
    <location>
        <begin position="717"/>
        <end position="719"/>
    </location>
</feature>
<feature type="helix" evidence="13">
    <location>
        <begin position="725"/>
        <end position="727"/>
    </location>
</feature>
<reference key="1">
    <citation type="journal article" date="1998" name="Science">
        <title>Genome sequence of the nematode C. elegans: a platform for investigating biology.</title>
        <authorList>
            <consortium name="The C. elegans sequencing consortium"/>
        </authorList>
    </citation>
    <scope>NUCLEOTIDE SEQUENCE [LARGE SCALE GENOMIC DNA]</scope>
    <source>
        <strain>Bristol N2</strain>
    </source>
</reference>
<reference key="2">
    <citation type="journal article" date="2009" name="PLoS Genet.">
        <title>Caenorhabditis elegans protein arginine methyltransferase PRMT-5 negatively regulates DNA damage-induced apoptosis.</title>
        <authorList>
            <person name="Yang M."/>
            <person name="Sun J."/>
            <person name="Sun X."/>
            <person name="Shen Q."/>
            <person name="Gao Z."/>
            <person name="Yang C."/>
        </authorList>
    </citation>
    <scope>FUNCTION</scope>
    <scope>SUBCELLULAR LOCATION</scope>
    <scope>INTERACTION WITH CEP-1 AND CBP-1</scope>
    <scope>DISRUPTION PHENOTYPE</scope>
</reference>
<reference key="3">
    <citation type="journal article" date="2011" name="Cell Metab.">
        <title>Asymmetric arginine dimethylation determines life span in C. elegans by regulating forkhead transcription factor DAF-16.</title>
        <authorList>
            <person name="Takahashi Y."/>
            <person name="Daitoku H."/>
            <person name="Hirota K."/>
            <person name="Tamiya H."/>
            <person name="Yokoyama A."/>
            <person name="Kako K."/>
            <person name="Nagashima Y."/>
            <person name="Nakamura A."/>
            <person name="Shimada T."/>
            <person name="Watanabe S."/>
            <person name="Yamagata K."/>
            <person name="Yasuda K."/>
            <person name="Ishii N."/>
            <person name="Fukamizu A."/>
        </authorList>
    </citation>
    <scope>FUNCTION</scope>
    <scope>CATALYTIC ACTIVITY</scope>
</reference>
<reference key="4">
    <citation type="journal article" date="2013" name="Biochemistry">
        <title>Substrate specificity, processivity, and kinetic mechanism of protein arginine methyltransferase 5.</title>
        <authorList>
            <person name="Wang M."/>
            <person name="Xu R.M."/>
            <person name="Thompson P.R."/>
        </authorList>
    </citation>
    <scope>FUNCTION</scope>
    <scope>BIOPHYSICOCHEMICAL PROPERTIES</scope>
    <scope>CATALYTIC ACTIVITY</scope>
</reference>
<reference key="5">
    <citation type="journal article" date="2017" name="J. Biochem.">
        <title>Simultaneous ablation of prmt-1 and prmt-5 abolishes asymmetric and symmetric arginine dimethylations in Caenorhabditis elegans.</title>
        <authorList>
            <person name="Hirota K."/>
            <person name="Shigekawa C."/>
            <person name="Araoi S."/>
            <person name="Sha L."/>
            <person name="Inagawa T."/>
            <person name="Kanou A."/>
            <person name="Kako K."/>
            <person name="Daitoku H."/>
            <person name="Fukamizu A."/>
        </authorList>
    </citation>
    <scope>FUNCTION</scope>
    <scope>DISRUPTION PHENOTYPE</scope>
</reference>
<reference key="6">
    <citation type="journal article" date="2021" name="EMBO J.">
        <title>Intrinsically disordered protein PID-2 modulates Z granules and is required for heritable piRNA-induced silencing in the Caenorhabditis elegans embryo.</title>
        <authorList>
            <person name="Placentino M."/>
            <person name="de Jesus Domingues A.M."/>
            <person name="Schreier J."/>
            <person name="Dietz S."/>
            <person name="Hellmann S."/>
            <person name="de Albuquerque B.F."/>
            <person name="Butter F."/>
            <person name="Ketting R.F."/>
        </authorList>
    </citation>
    <scope>INTERACTION WITH PID-2; PID-4 AND PID-5</scope>
</reference>
<reference key="7">
    <citation type="journal article" date="2011" name="Proc. Natl. Acad. Sci. U.S.A.">
        <title>Structural insights into protein arginine symmetric dimethylation by PRMT5.</title>
        <authorList>
            <person name="Sun L."/>
            <person name="Wang M."/>
            <person name="Lv Z."/>
            <person name="Yang N."/>
            <person name="Liu Y."/>
            <person name="Bao S."/>
            <person name="Gong W."/>
            <person name="Xu R.M."/>
        </authorList>
    </citation>
    <scope>X-RAY CRYSTALLOGRAPHY (3.0 ANGSTROMS)</scope>
    <scope>FUNCTION</scope>
    <scope>BIOPHYSICOCHEMICAL PROPERTIES</scope>
    <scope>ACTIVE SITE</scope>
    <scope>SUBUNIT</scope>
    <scope>MUTAGENESIS OF PHE-379</scope>
</reference>
<comment type="function">
    <text evidence="4 5 6 7 8 10">Catalyzes the symmetrical dimethylation of arginine residues in targets such as small nuclear ribonucleoproteins, histone H2A/H4 and cbp-1 (PubMed:19521535, PubMed:21531333, PubMed:22143770, PubMed:23866019, PubMed:28158808). Dimethylation occurs in a distributive manner where the protein is released after the addition of the first methyl group prior to rebinding for the addition of the second methyl group (PubMed:23866019). Plays a role in the negative regulation of DNA damage-induced apoptosis (PubMed:19521535). By methylating cbp-1, may prevent apoptosis by repressing the capacity of cbp-1 to enhance cep-1 dependent transcription activation of the programmed cell death activator egl-1 (PubMed:19521535). Plays a role in heat and oxidative stress resistance (PubMed:28158808).</text>
</comment>
<comment type="catalytic activity">
    <reaction evidence="5 7">
        <text>L-arginyl-[protein] + 2 S-adenosyl-L-methionine = N(omega),N(omega)'-dimethyl-L-arginyl-[protein] + 2 S-adenosyl-L-homocysteine + 2 H(+)</text>
        <dbReference type="Rhea" id="RHEA:48108"/>
        <dbReference type="Rhea" id="RHEA-COMP:10532"/>
        <dbReference type="Rhea" id="RHEA-COMP:11992"/>
        <dbReference type="ChEBI" id="CHEBI:15378"/>
        <dbReference type="ChEBI" id="CHEBI:29965"/>
        <dbReference type="ChEBI" id="CHEBI:57856"/>
        <dbReference type="ChEBI" id="CHEBI:59789"/>
        <dbReference type="ChEBI" id="CHEBI:88221"/>
        <dbReference type="EC" id="2.1.1.320"/>
    </reaction>
</comment>
<comment type="biophysicochemical properties">
    <kinetics>
        <KM evidence="6">4.5 uM for histone H4 (at 37 degrees Celsius)</KM>
        <KM evidence="7">22 uM for histone H4 (at 25 degrees Celsius)</KM>
        <Vmax evidence="6">1.4 nmol/min/mg enzyme with histone H4 as substrate</Vmax>
    </kinetics>
    <temperatureDependence>
        <text evidence="7">Optimum temperature is about 25 degrees Celsius.</text>
    </temperatureDependence>
</comment>
<comment type="subunit">
    <text evidence="4 6 9">Homodimer (PubMed:22143770). Interacts with cep-1 (via C-terminus domain); does not methylate cep-1 (PubMed:19521535). Interacts with cbp-1 (via N-terminus domain and HAT domain); the interaction results in methylation of cbp-1 (PubMed:19521535). Component of a complex that contains cep-1 and cbp-1 (PubMed:19521535). May interact with pid-2, pid-4 and pid-5 (PubMed:33231880).</text>
</comment>
<comment type="subcellular location">
    <subcellularLocation>
        <location evidence="4">Nucleus</location>
    </subcellularLocation>
</comment>
<comment type="disruption phenotype">
    <text evidence="4 8">Defective arginine methyltransferase activity with reduced symmetric dimethylation of targets (PubMed:28158808). Increased sensitivity to heat and oxidative stress (PubMed:28158808). Increased germ cell apoptosis following treatment with ionizing radiation (IR) or ethylnitrosourea and significantly enhanced IR-induced egl-1 levels (PubMed:19521535). Double knockout with prmt-1 results in prolonged larval development, shorter body size, reduced brood size, decreased egg-laying and 30% of eggs fail to hatch (PubMed:28158808). Double knockout also results in reduced asymmetric and symmetric arginine dimethylation of proteins (PubMed:28158808).</text>
</comment>
<comment type="similarity">
    <text evidence="2">Belongs to the class I-like SAM-binding methyltransferase superfamily. Protein arginine N-methyltransferase family.</text>
</comment>
<proteinExistence type="evidence at protein level"/>
<sequence length="734" mass="83292">MSNRTYADNLFPQQVAEQHEEQMSSGSSPKSNSPSRSISSVEAANSRIHIGWMATTLDVAENLDRHVATFCTRLGEFKYNFVVYPIGGVVRAFWTPNGSAENHPPVIDLPDVQLRNDLWESYVVGKISPWIDCDSSDPAFASLSEEHLLKELSYICYLGLQTMAIELTRISSPRTAAILKKWIWTRNSRFTVWVQLPSAIEKCKDYDAFTIEHVDLWTIWADFRKNCGNFSGVYFQVALTISSELPDELTELKLVDRWKAEPLAAFVIESGLFISGRNGEASIPSAHINLLKHLWTTDALRIVLRATTDTFKYNTSIKSEYSQALRHAVRNVNYRSRPDVGEGSNDSTHYLNVIEYKDVLQAPLQPLSENLDSGVYNTFEQDQIKYDVYGEAVVGALKDLGADGRKTVVIYLLGGGRGPIGTKILKSEREYNNTFRQGQESLKVKLYIVEKNPNAIVTLKYMNVRTWKRRVTIIESDMRSLPGIAKDRGFEQPDIIVSELLGSFGDNELSPECLDGVTGFLKPTTISIPQKYTSYVKPIMSTHIHQTIKAQSIPYLSRAIPSHGRGEPELDEDEMWIQKYPQGHVRNNMDQIYVVYLSKYIPLAETTKPVFTFEHPNFMNSSNERSDSIEFVMDRNADLMGFAGYFDLQLYKTVMLSIEPSTHTPGMVSWFPAVIPLRDQLRVGEGDRISLKIDRKVDNTGVWYEWHVEKKKTNGESVSTPIQNPNGESYYMRM</sequence>
<gene>
    <name evidence="12" type="primary">prmt-5</name>
    <name evidence="12" type="synonym">tag-251</name>
    <name evidence="12" type="ORF">C34E10.5</name>
</gene>